<feature type="chain" id="PRO_0000119465" description="GTP cyclohydrolase 1">
    <location>
        <begin position="1"/>
        <end position="187"/>
    </location>
</feature>
<feature type="binding site" evidence="2">
    <location>
        <position position="78"/>
    </location>
    <ligand>
        <name>Zn(2+)</name>
        <dbReference type="ChEBI" id="CHEBI:29105"/>
    </ligand>
</feature>
<feature type="binding site" evidence="2">
    <location>
        <position position="81"/>
    </location>
    <ligand>
        <name>Zn(2+)</name>
        <dbReference type="ChEBI" id="CHEBI:29105"/>
    </ligand>
</feature>
<feature type="binding site" evidence="2">
    <location>
        <position position="149"/>
    </location>
    <ligand>
        <name>Zn(2+)</name>
        <dbReference type="ChEBI" id="CHEBI:29105"/>
    </ligand>
</feature>
<reference key="1">
    <citation type="journal article" date="2003" name="Proc. Natl. Acad. Sci. U.S.A.">
        <title>Complete genome sequence and analysis of Wolinella succinogenes.</title>
        <authorList>
            <person name="Baar C."/>
            <person name="Eppinger M."/>
            <person name="Raddatz G."/>
            <person name="Simon J."/>
            <person name="Lanz C."/>
            <person name="Klimmek O."/>
            <person name="Nandakumar R."/>
            <person name="Gross R."/>
            <person name="Rosinus A."/>
            <person name="Keller H."/>
            <person name="Jagtap P."/>
            <person name="Linke B."/>
            <person name="Meyer F."/>
            <person name="Lederer H."/>
            <person name="Schuster S.C."/>
        </authorList>
    </citation>
    <scope>NUCLEOTIDE SEQUENCE [LARGE SCALE GENOMIC DNA]</scope>
    <source>
        <strain>ATCC 29543 / DSM 1740 / CCUG 13145 / JCM 31913 / LMG 7466 / NCTC 11488 / FDC 602W</strain>
    </source>
</reference>
<protein>
    <recommendedName>
        <fullName evidence="2">GTP cyclohydrolase 1</fullName>
        <ecNumber evidence="2">3.5.4.16</ecNumber>
    </recommendedName>
    <alternativeName>
        <fullName evidence="2">GTP cyclohydrolase I</fullName>
        <shortName evidence="2">GTP-CH-I</shortName>
    </alternativeName>
</protein>
<accession>Q7M933</accession>
<proteinExistence type="inferred from homology"/>
<sequence length="187" mass="21503">MEDKKIAMEETIRSIFDFIGDDRHREGLLDTPKRVVKSWDKLYSGYTQDPREILGTVFEDGACDEMVVLKNIEFYSMCEHHMLPFFGKVSIGYIPDQKVVGISKLARLVEVFARRLQIQEKMTGQIADTLMEVLQPKGAMVVAEATHMCMVMRGVEKQQSVMVTSAVRGLFKRDARTREEFMGHIRH</sequence>
<name>GCH1_WOLSU</name>
<evidence type="ECO:0000250" key="1"/>
<evidence type="ECO:0000255" key="2">
    <source>
        <dbReference type="HAMAP-Rule" id="MF_00223"/>
    </source>
</evidence>
<gene>
    <name evidence="2" type="primary">folE</name>
    <name type="ordered locus">WS1225</name>
</gene>
<keyword id="KW-0342">GTP-binding</keyword>
<keyword id="KW-0378">Hydrolase</keyword>
<keyword id="KW-0479">Metal-binding</keyword>
<keyword id="KW-0547">Nucleotide-binding</keyword>
<keyword id="KW-0554">One-carbon metabolism</keyword>
<keyword id="KW-1185">Reference proteome</keyword>
<keyword id="KW-0862">Zinc</keyword>
<comment type="catalytic activity">
    <reaction evidence="2">
        <text>GTP + H2O = 7,8-dihydroneopterin 3'-triphosphate + formate + H(+)</text>
        <dbReference type="Rhea" id="RHEA:17473"/>
        <dbReference type="ChEBI" id="CHEBI:15377"/>
        <dbReference type="ChEBI" id="CHEBI:15378"/>
        <dbReference type="ChEBI" id="CHEBI:15740"/>
        <dbReference type="ChEBI" id="CHEBI:37565"/>
        <dbReference type="ChEBI" id="CHEBI:58462"/>
        <dbReference type="EC" id="3.5.4.16"/>
    </reaction>
</comment>
<comment type="pathway">
    <text evidence="2">Cofactor biosynthesis; 7,8-dihydroneopterin triphosphate biosynthesis; 7,8-dihydroneopterin triphosphate from GTP: step 1/1.</text>
</comment>
<comment type="subunit">
    <text evidence="1">Toroid-shaped homodecamer, composed of two pentamers of five dimers.</text>
</comment>
<comment type="similarity">
    <text evidence="2">Belongs to the GTP cyclohydrolase I family.</text>
</comment>
<organism>
    <name type="scientific">Wolinella succinogenes (strain ATCC 29543 / DSM 1740 / CCUG 13145 / JCM 31913 / LMG 7466 / NCTC 11488 / FDC 602W)</name>
    <name type="common">Vibrio succinogenes</name>
    <dbReference type="NCBI Taxonomy" id="273121"/>
    <lineage>
        <taxon>Bacteria</taxon>
        <taxon>Pseudomonadati</taxon>
        <taxon>Campylobacterota</taxon>
        <taxon>Epsilonproteobacteria</taxon>
        <taxon>Campylobacterales</taxon>
        <taxon>Helicobacteraceae</taxon>
        <taxon>Wolinella</taxon>
    </lineage>
</organism>
<dbReference type="EC" id="3.5.4.16" evidence="2"/>
<dbReference type="EMBL" id="BX571660">
    <property type="protein sequence ID" value="CAE10306.1"/>
    <property type="molecule type" value="Genomic_DNA"/>
</dbReference>
<dbReference type="SMR" id="Q7M933"/>
<dbReference type="STRING" id="273121.WS1225"/>
<dbReference type="KEGG" id="wsu:WS1225"/>
<dbReference type="eggNOG" id="COG0302">
    <property type="taxonomic scope" value="Bacteria"/>
</dbReference>
<dbReference type="HOGENOM" id="CLU_049768_3_1_7"/>
<dbReference type="UniPathway" id="UPA00848">
    <property type="reaction ID" value="UER00151"/>
</dbReference>
<dbReference type="Proteomes" id="UP000000422">
    <property type="component" value="Chromosome"/>
</dbReference>
<dbReference type="GO" id="GO:0005737">
    <property type="term" value="C:cytoplasm"/>
    <property type="evidence" value="ECO:0007669"/>
    <property type="project" value="TreeGrafter"/>
</dbReference>
<dbReference type="GO" id="GO:0005525">
    <property type="term" value="F:GTP binding"/>
    <property type="evidence" value="ECO:0007669"/>
    <property type="project" value="UniProtKB-KW"/>
</dbReference>
<dbReference type="GO" id="GO:0003934">
    <property type="term" value="F:GTP cyclohydrolase I activity"/>
    <property type="evidence" value="ECO:0007669"/>
    <property type="project" value="UniProtKB-UniRule"/>
</dbReference>
<dbReference type="GO" id="GO:0008270">
    <property type="term" value="F:zinc ion binding"/>
    <property type="evidence" value="ECO:0007669"/>
    <property type="project" value="UniProtKB-UniRule"/>
</dbReference>
<dbReference type="GO" id="GO:0006730">
    <property type="term" value="P:one-carbon metabolic process"/>
    <property type="evidence" value="ECO:0007669"/>
    <property type="project" value="UniProtKB-UniRule"/>
</dbReference>
<dbReference type="GO" id="GO:0006729">
    <property type="term" value="P:tetrahydrobiopterin biosynthetic process"/>
    <property type="evidence" value="ECO:0007669"/>
    <property type="project" value="TreeGrafter"/>
</dbReference>
<dbReference type="GO" id="GO:0046654">
    <property type="term" value="P:tetrahydrofolate biosynthetic process"/>
    <property type="evidence" value="ECO:0007669"/>
    <property type="project" value="UniProtKB-UniRule"/>
</dbReference>
<dbReference type="FunFam" id="3.30.1130.10:FF:000001">
    <property type="entry name" value="GTP cyclohydrolase 1"/>
    <property type="match status" value="1"/>
</dbReference>
<dbReference type="Gene3D" id="1.10.286.10">
    <property type="match status" value="1"/>
</dbReference>
<dbReference type="Gene3D" id="3.30.1130.10">
    <property type="match status" value="1"/>
</dbReference>
<dbReference type="HAMAP" id="MF_00223">
    <property type="entry name" value="FolE"/>
    <property type="match status" value="1"/>
</dbReference>
<dbReference type="InterPro" id="IPR043133">
    <property type="entry name" value="GTP-CH-I_C/QueF"/>
</dbReference>
<dbReference type="InterPro" id="IPR043134">
    <property type="entry name" value="GTP-CH-I_N"/>
</dbReference>
<dbReference type="InterPro" id="IPR001474">
    <property type="entry name" value="GTP_CycHdrlase_I"/>
</dbReference>
<dbReference type="InterPro" id="IPR018234">
    <property type="entry name" value="GTP_CycHdrlase_I_CS"/>
</dbReference>
<dbReference type="InterPro" id="IPR020602">
    <property type="entry name" value="GTP_CycHdrlase_I_dom"/>
</dbReference>
<dbReference type="NCBIfam" id="TIGR00063">
    <property type="entry name" value="folE"/>
    <property type="match status" value="1"/>
</dbReference>
<dbReference type="NCBIfam" id="NF006825">
    <property type="entry name" value="PRK09347.1-2"/>
    <property type="match status" value="1"/>
</dbReference>
<dbReference type="NCBIfam" id="NF006826">
    <property type="entry name" value="PRK09347.1-3"/>
    <property type="match status" value="1"/>
</dbReference>
<dbReference type="PANTHER" id="PTHR11109:SF7">
    <property type="entry name" value="GTP CYCLOHYDROLASE 1"/>
    <property type="match status" value="1"/>
</dbReference>
<dbReference type="PANTHER" id="PTHR11109">
    <property type="entry name" value="GTP CYCLOHYDROLASE I"/>
    <property type="match status" value="1"/>
</dbReference>
<dbReference type="Pfam" id="PF01227">
    <property type="entry name" value="GTP_cyclohydroI"/>
    <property type="match status" value="1"/>
</dbReference>
<dbReference type="SUPFAM" id="SSF55620">
    <property type="entry name" value="Tetrahydrobiopterin biosynthesis enzymes-like"/>
    <property type="match status" value="1"/>
</dbReference>
<dbReference type="PROSITE" id="PS00859">
    <property type="entry name" value="GTP_CYCLOHYDROL_1_1"/>
    <property type="match status" value="1"/>
</dbReference>
<dbReference type="PROSITE" id="PS00860">
    <property type="entry name" value="GTP_CYCLOHYDROL_1_2"/>
    <property type="match status" value="1"/>
</dbReference>